<protein>
    <recommendedName>
        <fullName>Glutathione hydrolase 1 proenzyme</fullName>
        <ecNumber evidence="5">3.4.19.13</ecNumber>
    </recommendedName>
    <alternativeName>
        <fullName>Gamma-glutamyltransferase 1</fullName>
    </alternativeName>
    <alternativeName>
        <fullName>Gamma-glutamyltranspeptidase 1</fullName>
        <shortName>GGT 1</shortName>
        <ecNumber evidence="5">2.3.2.2</ecNumber>
    </alternativeName>
    <alternativeName>
        <fullName>Leukotriene-C4 hydrolase</fullName>
        <ecNumber evidence="5">3.4.19.14</ecNumber>
    </alternativeName>
    <cdAntigenName>CD224</cdAntigenName>
    <component>
        <recommendedName>
            <fullName>Glutathione hydrolase 1 heavy chain</fullName>
        </recommendedName>
    </component>
    <component>
        <recommendedName>
            <fullName>Glutathione hydrolase 1 light chain</fullName>
        </recommendedName>
    </component>
</protein>
<sequence length="568" mass="61610">MKNRFLVLGLVAVVLVFVIIGLCIWLPTTSGKPDHVYSRAAVATDAKRCSEIGRDMLQEGGSVVDAAIASLLCMGLINAHSMGIGGGLFFTIYNSTTRKAEVINAREMAPRLANTSMFNNSKDSEEGGLSVAVPGEIRGYELAHQRHGRLPWARLFQPSIQLARHGFPVGKGLARALDKKRDIIEKTPALCEVFCRQGKVLQEGETVTMPKLADTLQILAQEGARAFYNGSLTAQIVKDIQEAGGIMTVEDLNNYRAEVIEHPMSIGLGDSTLYVPSAPLSGPVLILILNILKGYNFSPKSVATPEQKALTYHRIVEAFRFAYAKRTMLGDPKFVDVSQVIRNMSSEFYATQLRARITDETTHPTAYYEPEFYLPDDGGTAHLSVVSEDGSAVAATSTINLYFGSKVLSRVSGILFNDEMDDFSSPNFTNQFGVAPSPANFIKPGKQPLSSMCPSIIVDKDGKVRMVVGASGGTQITTSVALAIINSLWFGYDVKRAVEEPRLHNQLLPNTTTVEKNIDQVVTAGLKTRHHHTEVTPDFIAVVQAVVRTSGGWAAASDSRKGGEPAGY</sequence>
<proteinExistence type="evidence at protein level"/>
<accession>P07314</accession>
<accession>Q63217</accession>
<accession>Q63218</accession>
<accession>Q6AZ32</accession>
<name>GGT1_RAT</name>
<reference key="1">
    <citation type="journal article" date="1989" name="Cancer Lett.">
        <title>Rat liver gamma glutamyl transpeptidase mRNA differs in the 5' untranslated sequence from the corresponding kidney mRNA.</title>
        <authorList>
            <person name="Griffiths S.A."/>
            <person name="Manson M.M."/>
        </authorList>
    </citation>
    <scope>NUCLEOTIDE SEQUENCE [MRNA]</scope>
    <source>
        <tissue>Liver</tissue>
    </source>
</reference>
<reference key="2">
    <citation type="journal article" date="1986" name="Proc. Natl. Acad. Sci. U.S.A.">
        <title>Molecular cloning and nucleotide sequence of rat kidney gamma-glutamyl transpeptidase cDNA.</title>
        <authorList>
            <person name="Laperche Y."/>
            <person name="Bulle F."/>
            <person name="Aissani T."/>
            <person name="Chobert M.-N."/>
            <person name="Aggerbeck M."/>
            <person name="Hanoune J."/>
            <person name="Guellaen G."/>
        </authorList>
    </citation>
    <scope>NUCLEOTIDE SEQUENCE [MRNA]</scope>
    <scope>PROTEIN SEQUENCE OF 31-43 AND 380-388</scope>
    <scope>TISSUE SPECIFICITY</scope>
    <source>
        <tissue>Kidney</tissue>
    </source>
</reference>
<reference key="3">
    <citation type="journal article" date="1989" name="Proc. Natl. Acad. Sci. U.S.A.">
        <authorList>
            <person name="Laperche Y."/>
            <person name="Bulle F."/>
            <person name="Aissani T."/>
            <person name="Chobert M.-N."/>
            <person name="Aggerbeck M."/>
            <person name="Hanoune J."/>
            <person name="Guellaen G."/>
        </authorList>
    </citation>
    <scope>ERRATUM OF PUBMED:2869484</scope>
    <scope>SEQUENCE REVISION TO 66-135</scope>
</reference>
<reference key="4">
    <citation type="journal article" date="2004" name="Genome Res.">
        <title>The status, quality, and expansion of the NIH full-length cDNA project: the Mammalian Gene Collection (MGC).</title>
        <authorList>
            <consortium name="The MGC Project Team"/>
        </authorList>
    </citation>
    <scope>NUCLEOTIDE SEQUENCE [LARGE SCALE MRNA]</scope>
    <source>
        <tissue>Testis</tissue>
    </source>
</reference>
<reference key="5">
    <citation type="journal article" date="1983" name="J. Biochem.">
        <title>Studies on the structure of gamma-glutamyltranspeptidase. III. Evidence that the amino terminus of the heavy subunit is the membrane binding segment.</title>
        <authorList>
            <person name="Matsuda Y."/>
            <person name="Tsuji A."/>
            <person name="Katunuma N."/>
        </authorList>
    </citation>
    <scope>PROTEIN SEQUENCE OF 1-21</scope>
    <scope>TOPOLOGY</scope>
</reference>
<reference key="6">
    <citation type="journal article" date="1994" name="J. Biol. Chem.">
        <title>Functional characterization of the rat gamma-glutamyl transpeptidase promoter that is expressed and regulated in the liver and hepatoma cells.</title>
        <authorList>
            <person name="Brouillet A."/>
            <person name="Darbouy M."/>
            <person name="Okamoto T."/>
            <person name="Chobert M.-N."/>
            <person name="Lahuna O."/>
            <person name="Garlatti M."/>
            <person name="Goodspeed D.C."/>
            <person name="Laperche Y."/>
        </authorList>
    </citation>
    <scope>NUCLEOTIDE SEQUENCE [MRNA] OF 1-18</scope>
    <source>
        <strain>Wistar</strain>
        <tissue>Liver</tissue>
    </source>
</reference>
<reference key="7">
    <citation type="journal article" date="1991" name="Biochemistry">
        <title>Organization of the 5' end of the rat gamma-glutamyl transpeptidase gene: structure of a promoter active in the kidney.</title>
        <authorList>
            <person name="Kurauchi O."/>
            <person name="Lahuna O."/>
            <person name="Darbouy M."/>
            <person name="Aggerbeck M."/>
            <person name="Chobert M.-N."/>
            <person name="Laperche Y."/>
        </authorList>
    </citation>
    <scope>NUCLEOTIDE SEQUENCE [GENOMIC DNA] OF 1-9</scope>
    <source>
        <tissue>Kidney</tissue>
    </source>
</reference>
<reference key="8">
    <citation type="journal article" date="1986" name="Nucleic Acids Res.">
        <title>Characterization and sequence of a cDNA clone of gamma-glutamyltranspeptidase.</title>
        <authorList>
            <person name="Coloma J."/>
            <person name="Pitot H.C."/>
        </authorList>
    </citation>
    <scope>NUCLEOTIDE SEQUENCE [MRNA] OF 4-568</scope>
    <source>
        <tissue>Kidney</tissue>
    </source>
</reference>
<reference key="9">
    <citation type="journal article" date="1988" name="Gene">
        <title>The primary structure of human gamma-glutamyl transpeptidase.</title>
        <authorList>
            <person name="Sakamuro D."/>
            <person name="Yamazoe M."/>
            <person name="Matsuda Y."/>
            <person name="Kangawa K."/>
            <person name="Taniguchi N."/>
            <person name="Matsuo H."/>
            <person name="Yoshikawa H."/>
            <person name="Ogasawara N."/>
        </authorList>
    </citation>
    <scope>NUCLEOTIDE SEQUENCE [MRNA] OF 64-136</scope>
</reference>
<reference key="10">
    <citation type="journal article" date="1988" name="Arch. Biochem. Biophys.">
        <title>Renal gamma-glutamyl transpeptidases: structural and immunological studies.</title>
        <authorList>
            <person name="Tate S.S."/>
            <person name="Khadse V."/>
            <person name="Wellner D."/>
        </authorList>
    </citation>
    <scope>PROTEIN SEQUENCE OF 30-47 AND 380-402</scope>
    <source>
        <tissue>Kidney</tissue>
    </source>
</reference>
<reference key="11">
    <citation type="journal article" date="1982" name="Proc. Natl. Acad. Sci. U.S.A.">
        <title>Interconversion of leukotrienes catalyzed by purified gamma-glutamyl transpeptidase: concomitant formation of leukotriene D4 and gamma-glutamyl amino acids.</title>
        <authorList>
            <person name="Anderson M.E."/>
            <person name="Allison R.D."/>
            <person name="Meister A."/>
        </authorList>
    </citation>
    <scope>FUNCTION</scope>
    <scope>CATALYTIC ACTIVITY</scope>
    <scope>BIOPHYSICOCHEMICAL PROPERTIES</scope>
    <source>
        <tissue>Kidney</tissue>
    </source>
</reference>
<reference key="12">
    <citation type="journal article" date="1999" name="Comp. Biochem. Physiol.">
        <title>Gamma-glutamyl transpeptidase gene organization and expression: a comparative analysis in rat, mouse, pig and human species.</title>
        <authorList>
            <person name="Chikhi N."/>
            <person name="Holic N."/>
            <person name="Guellaen G."/>
            <person name="Laperche Y."/>
        </authorList>
    </citation>
    <scope>GENE ORGANIZATION</scope>
    <scope>ALTERNATIVE PROMOTER USAGE</scope>
</reference>
<reference key="13">
    <citation type="journal article" date="1976" name="Proc. Natl. Acad. Sci. U.S.A.">
        <title>Subunit structure and isozymic forms of gamma-glutamyl transpeptidase.</title>
        <authorList>
            <person name="Tate S.S."/>
            <person name="Meister A."/>
        </authorList>
    </citation>
    <scope>GLYCOSYLATION</scope>
    <scope>SIALIC ACID CONTENT</scope>
</reference>
<reference key="14">
    <citation type="journal article" date="1984" name="J. Biol. Chem.">
        <title>In vitro translation and processing of rat kidney gamma-glutamyl transpeptidase.</title>
        <authorList>
            <person name="Nash B."/>
            <person name="Tate S.S."/>
        </authorList>
    </citation>
    <scope>GLYCOSYLATION</scope>
</reference>
<reference key="15">
    <citation type="journal article" date="1989" name="J. Biol. Chem.">
        <title>O-linked glycosylation of rat renal gamma-glutamyltranspeptidase adjacent to its membrane anchor domain.</title>
        <authorList>
            <person name="Blochberger T.C."/>
            <person name="Sabatine J.M."/>
            <person name="Lee Y.C."/>
            <person name="Hughey R.P."/>
        </authorList>
    </citation>
    <scope>GLYCOSYLATION</scope>
</reference>
<reference key="16">
    <citation type="journal article" date="2013" name="J. Proteome Res.">
        <title>Site-specific glycan-peptide analysis for determination of N-glycoproteome heterogeneity.</title>
        <authorList>
            <person name="Parker B.L."/>
            <person name="Thaysen-Andersen M."/>
            <person name="Solis N."/>
            <person name="Scott N.E."/>
            <person name="Larsen M.R."/>
            <person name="Graham M.E."/>
            <person name="Packer N.H."/>
            <person name="Cordwell S.J."/>
        </authorList>
    </citation>
    <scope>GLYCOSYLATION [LARGE SCALE ANALYSIS] AT ASN-510</scope>
    <scope>IDENTIFICATION BY MASS SPECTROMETRY [LARGE SCALE ANALYSIS]</scope>
    <source>
        <tissue>Brain</tissue>
    </source>
</reference>
<dbReference type="EC" id="3.4.19.13" evidence="5"/>
<dbReference type="EC" id="2.3.2.2" evidence="5"/>
<dbReference type="EC" id="3.4.19.14" evidence="5"/>
<dbReference type="EMBL" id="X15443">
    <property type="protein sequence ID" value="CAA33483.1"/>
    <property type="molecule type" value="mRNA"/>
</dbReference>
<dbReference type="EMBL" id="M33821">
    <property type="protein sequence ID" value="AAA57295.1"/>
    <property type="status" value="ALT_SEQ"/>
    <property type="molecule type" value="mRNA"/>
</dbReference>
<dbReference type="EMBL" id="M33822">
    <property type="protein sequence ID" value="AAB59698.1"/>
    <property type="molecule type" value="mRNA"/>
</dbReference>
<dbReference type="EMBL" id="BC078768">
    <property type="protein sequence ID" value="AAH78768.1"/>
    <property type="molecule type" value="mRNA"/>
</dbReference>
<dbReference type="EMBL" id="L29167">
    <property type="protein sequence ID" value="AAA41218.1"/>
    <property type="molecule type" value="mRNA"/>
</dbReference>
<dbReference type="EMBL" id="M57672">
    <property type="protein sequence ID" value="AAA41217.1"/>
    <property type="molecule type" value="Genomic_DNA"/>
</dbReference>
<dbReference type="EMBL" id="X03518">
    <property type="protein sequence ID" value="CAA27224.1"/>
    <property type="status" value="ALT_FRAME"/>
    <property type="molecule type" value="mRNA"/>
</dbReference>
<dbReference type="PIR" id="A05225">
    <property type="entry name" value="A05225"/>
</dbReference>
<dbReference type="RefSeq" id="NP_001421491.1">
    <property type="nucleotide sequence ID" value="NM_001434562.1"/>
</dbReference>
<dbReference type="RefSeq" id="NP_001421492.1">
    <property type="nucleotide sequence ID" value="NM_001434563.1"/>
</dbReference>
<dbReference type="RefSeq" id="NP_001421493.1">
    <property type="nucleotide sequence ID" value="NM_001434564.1"/>
</dbReference>
<dbReference type="RefSeq" id="NP_001421494.1">
    <property type="nucleotide sequence ID" value="NM_001434565.1"/>
</dbReference>
<dbReference type="RefSeq" id="NP_446292.2">
    <property type="nucleotide sequence ID" value="NM_053840.3"/>
</dbReference>
<dbReference type="RefSeq" id="XP_038954313.1">
    <property type="nucleotide sequence ID" value="XM_039098385.2"/>
</dbReference>
<dbReference type="RefSeq" id="XP_063135002.1">
    <property type="nucleotide sequence ID" value="XM_063278932.1"/>
</dbReference>
<dbReference type="RefSeq" id="XP_063135003.1">
    <property type="nucleotide sequence ID" value="XM_063278933.1"/>
</dbReference>
<dbReference type="RefSeq" id="XP_063135005.1">
    <property type="nucleotide sequence ID" value="XM_063278935.1"/>
</dbReference>
<dbReference type="SMR" id="P07314"/>
<dbReference type="FunCoup" id="P07314">
    <property type="interactions" value="116"/>
</dbReference>
<dbReference type="STRING" id="10116.ENSRNOP00000065923"/>
<dbReference type="BindingDB" id="P07314"/>
<dbReference type="ChEMBL" id="CHEMBL2943"/>
<dbReference type="DrugCentral" id="P07314"/>
<dbReference type="GlyConnect" id="170">
    <property type="glycosylation" value="1 O-Linked glycan"/>
</dbReference>
<dbReference type="GlyCosmos" id="P07314">
    <property type="glycosylation" value="7 sites, 4 glycans"/>
</dbReference>
<dbReference type="GlyGen" id="P07314">
    <property type="glycosylation" value="8 sites, 2 N-linked glycans (1 site), 2 O-linked glycans (1 site)"/>
</dbReference>
<dbReference type="iPTMnet" id="P07314"/>
<dbReference type="PhosphoSitePlus" id="P07314"/>
<dbReference type="Ensembl" id="ENSRNOT00000074533.3">
    <property type="protein sequence ID" value="ENSRNOP00000065923.3"/>
    <property type="gene ID" value="ENSRNOG00000047697.4"/>
</dbReference>
<dbReference type="GeneID" id="116568"/>
<dbReference type="KEGG" id="rno:116568"/>
<dbReference type="AGR" id="RGD:2683"/>
<dbReference type="CTD" id="2678"/>
<dbReference type="RGD" id="2683">
    <property type="gene designation" value="Ggt1"/>
</dbReference>
<dbReference type="GeneTree" id="ENSGT00940000154601"/>
<dbReference type="InParanoid" id="P07314"/>
<dbReference type="OMA" id="GFMLVHL"/>
<dbReference type="OrthoDB" id="1081007at2759"/>
<dbReference type="PhylomeDB" id="P07314"/>
<dbReference type="BRENDA" id="2.3.2.2">
    <property type="organism ID" value="5301"/>
</dbReference>
<dbReference type="Reactome" id="R-RNO-174403">
    <property type="pathway name" value="Glutathione synthesis and recycling"/>
</dbReference>
<dbReference type="Reactome" id="R-RNO-2142691">
    <property type="pathway name" value="Synthesis of Leukotrienes (LT) and Eoxins (EX)"/>
</dbReference>
<dbReference type="Reactome" id="R-RNO-5423646">
    <property type="pathway name" value="Aflatoxin activation and detoxification"/>
</dbReference>
<dbReference type="Reactome" id="R-RNO-9753281">
    <property type="pathway name" value="Paracetamol ADME"/>
</dbReference>
<dbReference type="UniPathway" id="UPA00204"/>
<dbReference type="UniPathway" id="UPA00880"/>
<dbReference type="PRO" id="PR:P07314"/>
<dbReference type="Proteomes" id="UP000002494">
    <property type="component" value="Chromosome 20"/>
</dbReference>
<dbReference type="GO" id="GO:0005615">
    <property type="term" value="C:extracellular space"/>
    <property type="evidence" value="ECO:0000314"/>
    <property type="project" value="RGD"/>
</dbReference>
<dbReference type="GO" id="GO:0005886">
    <property type="term" value="C:plasma membrane"/>
    <property type="evidence" value="ECO:0000250"/>
    <property type="project" value="UniProtKB"/>
</dbReference>
<dbReference type="GO" id="GO:0031982">
    <property type="term" value="C:vesicle"/>
    <property type="evidence" value="ECO:0000266"/>
    <property type="project" value="RGD"/>
</dbReference>
<dbReference type="GO" id="GO:0016755">
    <property type="term" value="F:aminoacyltransferase activity"/>
    <property type="evidence" value="ECO:0000314"/>
    <property type="project" value="RGD"/>
</dbReference>
<dbReference type="GO" id="GO:0036374">
    <property type="term" value="F:glutathione hydrolase activity"/>
    <property type="evidence" value="ECO:0000250"/>
    <property type="project" value="UniProtKB"/>
</dbReference>
<dbReference type="GO" id="GO:0103068">
    <property type="term" value="F:leukotriene C4 gamma-glutamyl transferase activity"/>
    <property type="evidence" value="ECO:0007669"/>
    <property type="project" value="UniProtKB-EC"/>
</dbReference>
<dbReference type="GO" id="GO:0002951">
    <property type="term" value="F:leukotriene-C(4) hydrolase"/>
    <property type="evidence" value="ECO:0000266"/>
    <property type="project" value="RGD"/>
</dbReference>
<dbReference type="GO" id="GO:0000048">
    <property type="term" value="F:peptidyltransferase activity"/>
    <property type="evidence" value="ECO:0000266"/>
    <property type="project" value="RGD"/>
</dbReference>
<dbReference type="GO" id="GO:0006520">
    <property type="term" value="P:amino acid metabolic process"/>
    <property type="evidence" value="ECO:0000266"/>
    <property type="project" value="RGD"/>
</dbReference>
<dbReference type="GO" id="GO:0034599">
    <property type="term" value="P:cellular response to oxidative stress"/>
    <property type="evidence" value="ECO:0000270"/>
    <property type="project" value="RGD"/>
</dbReference>
<dbReference type="GO" id="GO:0019344">
    <property type="term" value="P:cysteine biosynthetic process"/>
    <property type="evidence" value="ECO:0000266"/>
    <property type="project" value="RGD"/>
</dbReference>
<dbReference type="GO" id="GO:0006631">
    <property type="term" value="P:fatty acid metabolic process"/>
    <property type="evidence" value="ECO:0000266"/>
    <property type="project" value="RGD"/>
</dbReference>
<dbReference type="GO" id="GO:0006536">
    <property type="term" value="P:glutamate metabolic process"/>
    <property type="evidence" value="ECO:0000250"/>
    <property type="project" value="UniProtKB"/>
</dbReference>
<dbReference type="GO" id="GO:0006750">
    <property type="term" value="P:glutathione biosynthetic process"/>
    <property type="evidence" value="ECO:0000266"/>
    <property type="project" value="RGD"/>
</dbReference>
<dbReference type="GO" id="GO:0006751">
    <property type="term" value="P:glutathione catabolic process"/>
    <property type="evidence" value="ECO:0000250"/>
    <property type="project" value="UniProtKB"/>
</dbReference>
<dbReference type="GO" id="GO:0061017">
    <property type="term" value="P:hepatoblast differentiation"/>
    <property type="evidence" value="ECO:0000270"/>
    <property type="project" value="RGD"/>
</dbReference>
<dbReference type="GO" id="GO:0070365">
    <property type="term" value="P:hepatocyte differentiation"/>
    <property type="evidence" value="ECO:0000270"/>
    <property type="project" value="RGD"/>
</dbReference>
<dbReference type="GO" id="GO:1901750">
    <property type="term" value="P:leukotriene D4 biosynthetic process"/>
    <property type="evidence" value="ECO:0000266"/>
    <property type="project" value="RGD"/>
</dbReference>
<dbReference type="GO" id="GO:0006691">
    <property type="term" value="P:leukotriene metabolic process"/>
    <property type="evidence" value="ECO:0000266"/>
    <property type="project" value="RGD"/>
</dbReference>
<dbReference type="GO" id="GO:0097421">
    <property type="term" value="P:liver regeneration"/>
    <property type="evidence" value="ECO:0000270"/>
    <property type="project" value="RGD"/>
</dbReference>
<dbReference type="GO" id="GO:0031179">
    <property type="term" value="P:peptide modification"/>
    <property type="evidence" value="ECO:0000314"/>
    <property type="project" value="RGD"/>
</dbReference>
<dbReference type="GO" id="GO:0006508">
    <property type="term" value="P:proteolysis"/>
    <property type="evidence" value="ECO:0000266"/>
    <property type="project" value="RGD"/>
</dbReference>
<dbReference type="GO" id="GO:0002682">
    <property type="term" value="P:regulation of immune system process"/>
    <property type="evidence" value="ECO:0000266"/>
    <property type="project" value="RGD"/>
</dbReference>
<dbReference type="GO" id="GO:0050727">
    <property type="term" value="P:regulation of inflammatory response"/>
    <property type="evidence" value="ECO:0000266"/>
    <property type="project" value="RGD"/>
</dbReference>
<dbReference type="GO" id="GO:0097305">
    <property type="term" value="P:response to alcohol"/>
    <property type="evidence" value="ECO:0000270"/>
    <property type="project" value="RGD"/>
</dbReference>
<dbReference type="GO" id="GO:0032355">
    <property type="term" value="P:response to estradiol"/>
    <property type="evidence" value="ECO:0000270"/>
    <property type="project" value="RGD"/>
</dbReference>
<dbReference type="GO" id="GO:0032496">
    <property type="term" value="P:response to lipopolysaccharide"/>
    <property type="evidence" value="ECO:0000270"/>
    <property type="project" value="RGD"/>
</dbReference>
<dbReference type="GO" id="GO:0034612">
    <property type="term" value="P:response to tumor necrosis factor"/>
    <property type="evidence" value="ECO:0000270"/>
    <property type="project" value="RGD"/>
</dbReference>
<dbReference type="GO" id="GO:0007283">
    <property type="term" value="P:spermatogenesis"/>
    <property type="evidence" value="ECO:0000266"/>
    <property type="project" value="RGD"/>
</dbReference>
<dbReference type="GO" id="GO:0031638">
    <property type="term" value="P:zymogen activation"/>
    <property type="evidence" value="ECO:0000250"/>
    <property type="project" value="UniProtKB"/>
</dbReference>
<dbReference type="FunFam" id="3.60.20.40:FF:000007">
    <property type="entry name" value="Glutathione hydrolase 1 proenzyme"/>
    <property type="match status" value="1"/>
</dbReference>
<dbReference type="FunFam" id="1.10.246.130:FF:000002">
    <property type="entry name" value="glutathione hydrolase 1 proenzyme"/>
    <property type="match status" value="1"/>
</dbReference>
<dbReference type="Gene3D" id="1.10.246.130">
    <property type="match status" value="1"/>
</dbReference>
<dbReference type="Gene3D" id="3.60.20.40">
    <property type="match status" value="1"/>
</dbReference>
<dbReference type="InterPro" id="IPR055262">
    <property type="entry name" value="GGT_CS"/>
</dbReference>
<dbReference type="InterPro" id="IPR043138">
    <property type="entry name" value="GGT_lsub_C"/>
</dbReference>
<dbReference type="InterPro" id="IPR000101">
    <property type="entry name" value="GGT_peptidase"/>
</dbReference>
<dbReference type="InterPro" id="IPR043137">
    <property type="entry name" value="GGT_ssub"/>
</dbReference>
<dbReference type="InterPro" id="IPR029055">
    <property type="entry name" value="Ntn_hydrolases_N"/>
</dbReference>
<dbReference type="NCBIfam" id="TIGR00066">
    <property type="entry name" value="g_glut_trans"/>
    <property type="match status" value="1"/>
</dbReference>
<dbReference type="PANTHER" id="PTHR11686">
    <property type="entry name" value="GAMMA GLUTAMYL TRANSPEPTIDASE"/>
    <property type="match status" value="1"/>
</dbReference>
<dbReference type="PANTHER" id="PTHR11686:SF56">
    <property type="entry name" value="GLUTATHIONE HYDROLASE 1 PROENZYME-RELATED"/>
    <property type="match status" value="1"/>
</dbReference>
<dbReference type="Pfam" id="PF01019">
    <property type="entry name" value="G_glu_transpept"/>
    <property type="match status" value="1"/>
</dbReference>
<dbReference type="PRINTS" id="PR01210">
    <property type="entry name" value="GGTRANSPTASE"/>
</dbReference>
<dbReference type="SUPFAM" id="SSF56235">
    <property type="entry name" value="N-terminal nucleophile aminohydrolases (Ntn hydrolases)"/>
    <property type="match status" value="1"/>
</dbReference>
<dbReference type="PROSITE" id="PS00462">
    <property type="entry name" value="G_GLU_TRANSPEPTIDASE"/>
    <property type="match status" value="1"/>
</dbReference>
<feature type="chain" id="PRO_0000011064" description="Glutathione hydrolase 1 heavy chain">
    <location>
        <begin position="1"/>
        <end position="379"/>
    </location>
</feature>
<feature type="chain" id="PRO_0000011065" description="Glutathione hydrolase 1 light chain" evidence="4">
    <location>
        <begin position="380"/>
        <end position="568"/>
    </location>
</feature>
<feature type="topological domain" description="Cytoplasmic" evidence="9">
    <location>
        <begin position="1"/>
        <end position="4"/>
    </location>
</feature>
<feature type="transmembrane region" description="Helical; Signal-anchor for type II membrane protein" evidence="9">
    <location>
        <begin position="5"/>
        <end position="26"/>
    </location>
</feature>
<feature type="topological domain" description="Extracellular" evidence="9">
    <location>
        <begin position="27"/>
        <end position="568"/>
    </location>
</feature>
<feature type="active site" description="Nucleophile" evidence="1">
    <location>
        <position position="380"/>
    </location>
</feature>
<feature type="binding site" evidence="1">
    <location>
        <position position="106"/>
    </location>
    <ligand>
        <name>L-glutamate</name>
        <dbReference type="ChEBI" id="CHEBI:29985"/>
    </ligand>
</feature>
<feature type="binding site" evidence="1">
    <location>
        <begin position="398"/>
        <end position="400"/>
    </location>
    <ligand>
        <name>L-glutamate</name>
        <dbReference type="ChEBI" id="CHEBI:29985"/>
    </ligand>
</feature>
<feature type="binding site" evidence="1">
    <location>
        <position position="419"/>
    </location>
    <ligand>
        <name>L-glutamate</name>
        <dbReference type="ChEBI" id="CHEBI:29985"/>
    </ligand>
</feature>
<feature type="binding site" evidence="1">
    <location>
        <position position="422"/>
    </location>
    <ligand>
        <name>L-glutamate</name>
        <dbReference type="ChEBI" id="CHEBI:29985"/>
    </ligand>
</feature>
<feature type="binding site" evidence="1">
    <location>
        <begin position="450"/>
        <end position="451"/>
    </location>
    <ligand>
        <name>L-glutamate</name>
        <dbReference type="ChEBI" id="CHEBI:29985"/>
    </ligand>
</feature>
<feature type="binding site" evidence="1">
    <location>
        <position position="473"/>
    </location>
    <ligand>
        <name>L-glutamate</name>
        <dbReference type="ChEBI" id="CHEBI:29985"/>
    </ligand>
</feature>
<feature type="glycosylation site" description="N-linked (GlcNAc...) asparagine" evidence="2">
    <location>
        <position position="94"/>
    </location>
</feature>
<feature type="glycosylation site" description="N-linked (GlcNAc...) asparagine" evidence="2">
    <location>
        <position position="114"/>
    </location>
</feature>
<feature type="glycosylation site" description="N-linked (GlcNAc...) asparagine" evidence="2">
    <location>
        <position position="119"/>
    </location>
</feature>
<feature type="glycosylation site" description="N-linked (GlcNAc...) asparagine" evidence="2">
    <location>
        <position position="229"/>
    </location>
</feature>
<feature type="glycosylation site" description="N-linked (GlcNAc...) asparagine" evidence="2">
    <location>
        <position position="343"/>
    </location>
</feature>
<feature type="glycosylation site" description="N-linked (GlcNAc...) asparagine" evidence="2">
    <location>
        <position position="427"/>
    </location>
</feature>
<feature type="glycosylation site" description="N-linked (GlcNAc...) asparagine" evidence="10">
    <location>
        <position position="510"/>
    </location>
</feature>
<feature type="disulfide bond" evidence="1">
    <location>
        <begin position="49"/>
        <end position="73"/>
    </location>
</feature>
<feature type="disulfide bond" evidence="1">
    <location>
        <begin position="191"/>
        <end position="195"/>
    </location>
</feature>
<feature type="sequence conflict" description="In Ref. 7; AAA41217." evidence="7" ref="7">
    <original>G</original>
    <variation>A</variation>
    <location>
        <position position="9"/>
    </location>
</feature>
<feature type="sequence conflict" description="In Ref. 2; AAA57295/AAB59698." evidence="7" ref="2">
    <original>R</original>
    <variation>K</variation>
    <location>
        <position position="39"/>
    </location>
</feature>
<feature type="sequence conflict" description="In Ref. 2; AAB59698." evidence="7" ref="2">
    <original>R</original>
    <variation>K</variation>
    <location>
        <position position="111"/>
    </location>
</feature>
<feature type="sequence conflict" description="In Ref. 2; AAA57295/AAB59698 and 8; CAA27224." evidence="7" ref="2 8">
    <original>P</original>
    <variation>A</variation>
    <location>
        <position position="370"/>
    </location>
</feature>
<feature type="sequence conflict" description="In Ref. 8; CAA27224." evidence="7" ref="8">
    <original>S</original>
    <variation>M</variation>
    <location>
        <position position="397"/>
    </location>
</feature>
<feature type="sequence conflict" description="In Ref. 8; CAA27224." evidence="7" ref="8">
    <original>F</original>
    <variation>V</variation>
    <location>
        <position position="416"/>
    </location>
</feature>
<feature type="sequence conflict" description="In Ref. 2; AAA57295/AAB59698." evidence="7" ref="2">
    <original>P</original>
    <variation>L</variation>
    <location>
        <position position="444"/>
    </location>
</feature>
<keyword id="KW-0012">Acyltransferase</keyword>
<keyword id="KW-1003">Cell membrane</keyword>
<keyword id="KW-0903">Direct protein sequencing</keyword>
<keyword id="KW-1015">Disulfide bond</keyword>
<keyword id="KW-0317">Glutathione biosynthesis</keyword>
<keyword id="KW-0325">Glycoprotein</keyword>
<keyword id="KW-0378">Hydrolase</keyword>
<keyword id="KW-0472">Membrane</keyword>
<keyword id="KW-0645">Protease</keyword>
<keyword id="KW-1185">Reference proteome</keyword>
<keyword id="KW-0730">Sialic acid</keyword>
<keyword id="KW-0735">Signal-anchor</keyword>
<keyword id="KW-0808">Transferase</keyword>
<keyword id="KW-0812">Transmembrane</keyword>
<keyword id="KW-1133">Transmembrane helix</keyword>
<keyword id="KW-0865">Zymogen</keyword>
<comment type="function">
    <text evidence="1 5">Cleaves the gamma-glutamyl bond of extracellular glutathione (gamma-Glu-Cys-Gly), glutathione conjugates (such as maresin conjugate (13R)-S-glutathionyl-(14S)-hydroxy-(4Z,7Z,9E,11E,16Z,19Z)-docosahexaenoate, MCTR1) and other gamma-glutamyl compounds (such as leukotriene C4, LTC4) (By similarity) (PubMed:6122208). The metabolism of glutathione by GGT1 releases free glutamate and the dipeptide cysteinyl-glycine, which is hydrolyzed to cysteine and glycine by dipeptidases (PubMed:6122208). In the presence of high concentrations of dipeptides and some amino acids, can also catalyze a transpeptidation reaction, transferring the gamma-glutamyl moiety to an acceptor amino acid to form a new gamma-glutamyl compound (PubMed:6122208). Contributes to cysteine homeostasis, glutathione homeostasis and in the conversion of the leukotriene LTC4 to LTD4 (PubMed:6122208).</text>
</comment>
<comment type="catalytic activity">
    <reaction evidence="5">
        <text>an N-terminal (5-L-glutamyl)-[peptide] + an alpha-amino acid = 5-L-glutamyl amino acid + an N-terminal L-alpha-aminoacyl-[peptide]</text>
        <dbReference type="Rhea" id="RHEA:23904"/>
        <dbReference type="Rhea" id="RHEA-COMP:9780"/>
        <dbReference type="Rhea" id="RHEA-COMP:9795"/>
        <dbReference type="ChEBI" id="CHEBI:77644"/>
        <dbReference type="ChEBI" id="CHEBI:78597"/>
        <dbReference type="ChEBI" id="CHEBI:78599"/>
        <dbReference type="ChEBI" id="CHEBI:78608"/>
        <dbReference type="EC" id="2.3.2.2"/>
    </reaction>
    <physiologicalReaction direction="left-to-right" evidence="8">
        <dbReference type="Rhea" id="RHEA:23905"/>
    </physiologicalReaction>
    <physiologicalReaction direction="right-to-left" evidence="8">
        <dbReference type="Rhea" id="RHEA:23906"/>
    </physiologicalReaction>
</comment>
<comment type="catalytic activity">
    <reaction evidence="5">
        <text>glutathione + H2O = L-cysteinylglycine + L-glutamate</text>
        <dbReference type="Rhea" id="RHEA:28807"/>
        <dbReference type="ChEBI" id="CHEBI:15377"/>
        <dbReference type="ChEBI" id="CHEBI:29985"/>
        <dbReference type="ChEBI" id="CHEBI:57925"/>
        <dbReference type="ChEBI" id="CHEBI:61694"/>
        <dbReference type="EC" id="3.4.19.13"/>
    </reaction>
    <physiologicalReaction direction="left-to-right" evidence="8">
        <dbReference type="Rhea" id="RHEA:28808"/>
    </physiologicalReaction>
</comment>
<comment type="catalytic activity">
    <reaction evidence="1">
        <text>an S-substituted glutathione + H2O = an S-substituted L-cysteinylglycine + L-glutamate</text>
        <dbReference type="Rhea" id="RHEA:59468"/>
        <dbReference type="ChEBI" id="CHEBI:15377"/>
        <dbReference type="ChEBI" id="CHEBI:29985"/>
        <dbReference type="ChEBI" id="CHEBI:90779"/>
        <dbReference type="ChEBI" id="CHEBI:143103"/>
        <dbReference type="EC" id="3.4.19.13"/>
    </reaction>
    <physiologicalReaction direction="left-to-right" evidence="1">
        <dbReference type="Rhea" id="RHEA:59469"/>
    </physiologicalReaction>
</comment>
<comment type="catalytic activity">
    <reaction evidence="5">
        <text>leukotriene C4 + H2O = leukotriene D4 + L-glutamate</text>
        <dbReference type="Rhea" id="RHEA:31563"/>
        <dbReference type="ChEBI" id="CHEBI:15377"/>
        <dbReference type="ChEBI" id="CHEBI:29985"/>
        <dbReference type="ChEBI" id="CHEBI:57973"/>
        <dbReference type="ChEBI" id="CHEBI:63166"/>
        <dbReference type="EC" id="3.4.19.14"/>
    </reaction>
    <physiologicalReaction direction="left-to-right" evidence="8">
        <dbReference type="Rhea" id="RHEA:31564"/>
    </physiologicalReaction>
</comment>
<comment type="catalytic activity">
    <reaction evidence="1">
        <text>(13R)-S-glutathionyl-(14S)-hydroxy-(4Z,7Z,9E,11E,16Z,19Z)-docosahexaenoate + H2O = (13R)-S-cysteinylglycyl-(14S)-hydroxy-(4Z,7Z,9E,11E,16Z,19Z)-docosahexaenoate + L-glutamate</text>
        <dbReference type="Rhea" id="RHEA:53512"/>
        <dbReference type="ChEBI" id="CHEBI:15377"/>
        <dbReference type="ChEBI" id="CHEBI:29985"/>
        <dbReference type="ChEBI" id="CHEBI:137407"/>
        <dbReference type="ChEBI" id="CHEBI:137408"/>
    </reaction>
    <physiologicalReaction direction="left-to-right" evidence="1">
        <dbReference type="Rhea" id="RHEA:53513"/>
    </physiologicalReaction>
</comment>
<comment type="activity regulation">
    <text evidence="1">Activated by autocatalytic cleavage.</text>
</comment>
<comment type="biophysicochemical properties">
    <kinetics>
        <KM evidence="5">5.9 uM for leukotriene C(4)</KM>
        <KM evidence="5">5.7 uM for glutathione</KM>
        <KM evidence="5">5.8 uM for gamma-glutamyl-p-anilide</KM>
    </kinetics>
</comment>
<comment type="pathway">
    <text evidence="8">Sulfur metabolism; glutathione metabolism.</text>
</comment>
<comment type="pathway">
    <text evidence="8">Lipid metabolism; leukotriene D4 biosynthesis.</text>
</comment>
<comment type="subunit">
    <text evidence="1">Heterodimer composed of the light and heavy chains. The active site is located in the light chain.</text>
</comment>
<comment type="subcellular location">
    <subcellularLocation>
        <location evidence="1">Cell membrane</location>
        <topology evidence="9">Single-pass type II membrane protein</topology>
    </subcellularLocation>
</comment>
<comment type="tissue specificity">
    <text evidence="4">Detected in adult kidney and mammary gland, and in fetal liver.</text>
</comment>
<comment type="PTM">
    <text evidence="6">N-glycosylated on both chains; contains sialic acid residues. It is not known if the sialic acid residues are present on N-linked or on O-linked glycans.</text>
</comment>
<comment type="PTM">
    <text evidence="3">O-glycosylated; close to the membrane anchor on the heavy chain and on the light chain. The sugar moieties are localized to the stretch Thr-28 to Ser-30. Contains sialic acid residues. It is not known if the sialic acid residues are present on N-linked or on O-linked glycans.</text>
</comment>
<comment type="PTM">
    <text evidence="1">Cleaved by autocatalysis into a large and a small subunit and the autocatalytic cleavage is essential to the functional activation of the enzyme.</text>
</comment>
<comment type="similarity">
    <text evidence="7">Belongs to the gamma-glutamyltransferase family.</text>
</comment>
<comment type="sequence caution" evidence="7">
    <conflict type="frameshift">
        <sequence resource="EMBL-CDS" id="CAA27224"/>
    </conflict>
</comment>
<organism>
    <name type="scientific">Rattus norvegicus</name>
    <name type="common">Rat</name>
    <dbReference type="NCBI Taxonomy" id="10116"/>
    <lineage>
        <taxon>Eukaryota</taxon>
        <taxon>Metazoa</taxon>
        <taxon>Chordata</taxon>
        <taxon>Craniata</taxon>
        <taxon>Vertebrata</taxon>
        <taxon>Euteleostomi</taxon>
        <taxon>Mammalia</taxon>
        <taxon>Eutheria</taxon>
        <taxon>Euarchontoglires</taxon>
        <taxon>Glires</taxon>
        <taxon>Rodentia</taxon>
        <taxon>Myomorpha</taxon>
        <taxon>Muroidea</taxon>
        <taxon>Muridae</taxon>
        <taxon>Murinae</taxon>
        <taxon>Rattus</taxon>
    </lineage>
</organism>
<gene>
    <name type="primary">Ggt1</name>
    <name type="synonym">Ggt</name>
</gene>
<evidence type="ECO:0000250" key="1">
    <source>
        <dbReference type="UniProtKB" id="P19440"/>
    </source>
</evidence>
<evidence type="ECO:0000255" key="2"/>
<evidence type="ECO:0000269" key="3">
    <source>
    </source>
</evidence>
<evidence type="ECO:0000269" key="4">
    <source>
    </source>
</evidence>
<evidence type="ECO:0000269" key="5">
    <source>
    </source>
</evidence>
<evidence type="ECO:0000269" key="6">
    <source>
    </source>
</evidence>
<evidence type="ECO:0000305" key="7"/>
<evidence type="ECO:0000305" key="8">
    <source>
    </source>
</evidence>
<evidence type="ECO:0000305" key="9">
    <source>
    </source>
</evidence>
<evidence type="ECO:0007744" key="10">
    <source>
    </source>
</evidence>